<reference key="1">
    <citation type="journal article" date="1992" name="DNA Seq.">
        <title>The sea urchin erg homolog defines a highly conserved erg-specific domain.</title>
        <authorList>
            <person name="Qi S."/>
            <person name="Chen Z.Q."/>
            <person name="Papas T.S."/>
            <person name="Lautenberger J.A."/>
        </authorList>
    </citation>
    <scope>NUCLEOTIDE SEQUENCE [GENOMIC DNA]</scope>
</reference>
<evidence type="ECO:0000255" key="1">
    <source>
        <dbReference type="PROSITE-ProRule" id="PRU00237"/>
    </source>
</evidence>
<evidence type="ECO:0000305" key="2"/>
<dbReference type="EMBL" id="M81067">
    <property type="protein sequence ID" value="AAA68905.1"/>
    <property type="molecule type" value="Genomic_DNA"/>
</dbReference>
<dbReference type="PIR" id="A56646">
    <property type="entry name" value="A56646"/>
</dbReference>
<dbReference type="SMR" id="Q01414"/>
<dbReference type="EnsemblMetazoa" id="XM_041614347.1">
    <property type="protein sequence ID" value="XP_041470281.1"/>
    <property type="gene ID" value="LOC121419882"/>
</dbReference>
<dbReference type="OrthoDB" id="10067219at2759"/>
<dbReference type="GO" id="GO:0005634">
    <property type="term" value="C:nucleus"/>
    <property type="evidence" value="ECO:0007669"/>
    <property type="project" value="UniProtKB-SubCell"/>
</dbReference>
<dbReference type="GO" id="GO:0000981">
    <property type="term" value="F:DNA-binding transcription factor activity, RNA polymerase II-specific"/>
    <property type="evidence" value="ECO:0007669"/>
    <property type="project" value="TreeGrafter"/>
</dbReference>
<dbReference type="GO" id="GO:0043565">
    <property type="term" value="F:sequence-specific DNA binding"/>
    <property type="evidence" value="ECO:0007669"/>
    <property type="project" value="InterPro"/>
</dbReference>
<dbReference type="GO" id="GO:0030154">
    <property type="term" value="P:cell differentiation"/>
    <property type="evidence" value="ECO:0007669"/>
    <property type="project" value="TreeGrafter"/>
</dbReference>
<dbReference type="FunFam" id="1.10.10.10:FF:000343">
    <property type="entry name" value="Ets at 65A, isoform C"/>
    <property type="match status" value="1"/>
</dbReference>
<dbReference type="Gene3D" id="1.10.10.10">
    <property type="entry name" value="Winged helix-like DNA-binding domain superfamily/Winged helix DNA-binding domain"/>
    <property type="match status" value="1"/>
</dbReference>
<dbReference type="InterPro" id="IPR000418">
    <property type="entry name" value="Ets_dom"/>
</dbReference>
<dbReference type="InterPro" id="IPR046328">
    <property type="entry name" value="ETS_fam"/>
</dbReference>
<dbReference type="InterPro" id="IPR036388">
    <property type="entry name" value="WH-like_DNA-bd_sf"/>
</dbReference>
<dbReference type="InterPro" id="IPR036390">
    <property type="entry name" value="WH_DNA-bd_sf"/>
</dbReference>
<dbReference type="PANTHER" id="PTHR11849:SF304">
    <property type="entry name" value="DNA-BINDING PROTEIN D-ETS-3"/>
    <property type="match status" value="1"/>
</dbReference>
<dbReference type="PANTHER" id="PTHR11849">
    <property type="entry name" value="ETS"/>
    <property type="match status" value="1"/>
</dbReference>
<dbReference type="Pfam" id="PF00178">
    <property type="entry name" value="Ets"/>
    <property type="match status" value="1"/>
</dbReference>
<dbReference type="PRINTS" id="PR00454">
    <property type="entry name" value="ETSDOMAIN"/>
</dbReference>
<dbReference type="SMART" id="SM00413">
    <property type="entry name" value="ETS"/>
    <property type="match status" value="1"/>
</dbReference>
<dbReference type="SUPFAM" id="SSF46785">
    <property type="entry name" value="Winged helix' DNA-binding domain"/>
    <property type="match status" value="1"/>
</dbReference>
<dbReference type="PROSITE" id="PS00345">
    <property type="entry name" value="ETS_DOMAIN_1"/>
    <property type="match status" value="1"/>
</dbReference>
<dbReference type="PROSITE" id="PS00346">
    <property type="entry name" value="ETS_DOMAIN_2"/>
    <property type="match status" value="1"/>
</dbReference>
<dbReference type="PROSITE" id="PS50061">
    <property type="entry name" value="ETS_DOMAIN_3"/>
    <property type="match status" value="1"/>
</dbReference>
<comment type="function">
    <text>Acts as a transcriptional activator.</text>
</comment>
<comment type="subcellular location">
    <subcellularLocation>
        <location>Nucleus</location>
    </subcellularLocation>
</comment>
<comment type="similarity">
    <text evidence="2">Belongs to the ETS family.</text>
</comment>
<accession>Q01414</accession>
<gene>
    <name type="primary">ERG</name>
</gene>
<feature type="chain" id="PRO_0000204106" description="Transcriptional regulator ERG homolog">
    <location>
        <begin position="1" status="less than"/>
        <end position="173"/>
    </location>
</feature>
<feature type="DNA-binding region" description="ETS" evidence="1">
    <location>
        <begin position="1" status="less than"/>
        <end position="84"/>
    </location>
</feature>
<feature type="non-terminal residue">
    <location>
        <position position="1"/>
    </location>
</feature>
<name>ERG_LYTVA</name>
<keyword id="KW-0010">Activator</keyword>
<keyword id="KW-0238">DNA-binding</keyword>
<keyword id="KW-0539">Nucleus</keyword>
<keyword id="KW-0804">Transcription</keyword>
<keyword id="KW-0805">Transcription regulation</keyword>
<proteinExistence type="inferred from homology"/>
<organism>
    <name type="scientific">Lytechinus variegatus</name>
    <name type="common">Green sea urchin</name>
    <name type="synonym">Echinus variegatus</name>
    <dbReference type="NCBI Taxonomy" id="7654"/>
    <lineage>
        <taxon>Eukaryota</taxon>
        <taxon>Metazoa</taxon>
        <taxon>Echinodermata</taxon>
        <taxon>Eleutherozoa</taxon>
        <taxon>Echinozoa</taxon>
        <taxon>Echinoidea</taxon>
        <taxon>Euechinoidea</taxon>
        <taxon>Echinacea</taxon>
        <taxon>Temnopleuroida</taxon>
        <taxon>Toxopneustidae</taxon>
        <taxon>Lytechinus</taxon>
    </lineage>
</organism>
<protein>
    <recommendedName>
        <fullName>Transcriptional regulator ERG homolog</fullName>
    </recommendedName>
</protein>
<sequence>SGQIQLWQFLLELLSDSSNANCITWEGTNGEFKMTDPDEVARRWGERKSKPNMNYDKLSRALRYYYDKNIMTKVHGKRYAYKFDFAGLAQAMQPVQADPSMYRYQSDLTYLPGYHPTKLNFVGTPINPSTNASLFSSHSSYWSSPTGANIYPSGHVTHPHASHMSSHIGTYYG</sequence>